<name>TRPF_STAAS</name>
<keyword id="KW-0028">Amino-acid biosynthesis</keyword>
<keyword id="KW-0057">Aromatic amino acid biosynthesis</keyword>
<keyword id="KW-0413">Isomerase</keyword>
<keyword id="KW-0822">Tryptophan biosynthesis</keyword>
<proteinExistence type="inferred from homology"/>
<feature type="chain" id="PRO_0000154380" description="N-(5'-phosphoribosyl)anthranilate isomerase">
    <location>
        <begin position="1"/>
        <end position="210"/>
    </location>
</feature>
<dbReference type="EC" id="5.3.1.24" evidence="1"/>
<dbReference type="EMBL" id="BX571857">
    <property type="protein sequence ID" value="CAG43088.1"/>
    <property type="molecule type" value="Genomic_DNA"/>
</dbReference>
<dbReference type="RefSeq" id="WP_000768192.1">
    <property type="nucleotide sequence ID" value="NC_002953.3"/>
</dbReference>
<dbReference type="SMR" id="Q6G9I8"/>
<dbReference type="KEGG" id="sas:SAS1311"/>
<dbReference type="HOGENOM" id="CLU_076364_1_1_9"/>
<dbReference type="UniPathway" id="UPA00035">
    <property type="reaction ID" value="UER00042"/>
</dbReference>
<dbReference type="GO" id="GO:0004640">
    <property type="term" value="F:phosphoribosylanthranilate isomerase activity"/>
    <property type="evidence" value="ECO:0007669"/>
    <property type="project" value="UniProtKB-UniRule"/>
</dbReference>
<dbReference type="GO" id="GO:0000162">
    <property type="term" value="P:L-tryptophan biosynthetic process"/>
    <property type="evidence" value="ECO:0007669"/>
    <property type="project" value="UniProtKB-UniRule"/>
</dbReference>
<dbReference type="CDD" id="cd00405">
    <property type="entry name" value="PRAI"/>
    <property type="match status" value="1"/>
</dbReference>
<dbReference type="FunFam" id="3.20.20.70:FF:000277">
    <property type="entry name" value="Phosphoribosylanthranilate isomerase"/>
    <property type="match status" value="1"/>
</dbReference>
<dbReference type="Gene3D" id="3.20.20.70">
    <property type="entry name" value="Aldolase class I"/>
    <property type="match status" value="1"/>
</dbReference>
<dbReference type="HAMAP" id="MF_00135">
    <property type="entry name" value="PRAI"/>
    <property type="match status" value="1"/>
</dbReference>
<dbReference type="InterPro" id="IPR013785">
    <property type="entry name" value="Aldolase_TIM"/>
</dbReference>
<dbReference type="InterPro" id="IPR001240">
    <property type="entry name" value="PRAI_dom"/>
</dbReference>
<dbReference type="InterPro" id="IPR011060">
    <property type="entry name" value="RibuloseP-bd_barrel"/>
</dbReference>
<dbReference type="InterPro" id="IPR044643">
    <property type="entry name" value="TrpF_fam"/>
</dbReference>
<dbReference type="NCBIfam" id="NF010563">
    <property type="entry name" value="PRK13958.1"/>
    <property type="match status" value="1"/>
</dbReference>
<dbReference type="PANTHER" id="PTHR42894">
    <property type="entry name" value="N-(5'-PHOSPHORIBOSYL)ANTHRANILATE ISOMERASE"/>
    <property type="match status" value="1"/>
</dbReference>
<dbReference type="PANTHER" id="PTHR42894:SF1">
    <property type="entry name" value="N-(5'-PHOSPHORIBOSYL)ANTHRANILATE ISOMERASE"/>
    <property type="match status" value="1"/>
</dbReference>
<dbReference type="Pfam" id="PF00697">
    <property type="entry name" value="PRAI"/>
    <property type="match status" value="1"/>
</dbReference>
<dbReference type="SUPFAM" id="SSF51366">
    <property type="entry name" value="Ribulose-phoshate binding barrel"/>
    <property type="match status" value="1"/>
</dbReference>
<comment type="catalytic activity">
    <reaction evidence="1">
        <text>N-(5-phospho-beta-D-ribosyl)anthranilate = 1-(2-carboxyphenylamino)-1-deoxy-D-ribulose 5-phosphate</text>
        <dbReference type="Rhea" id="RHEA:21540"/>
        <dbReference type="ChEBI" id="CHEBI:18277"/>
        <dbReference type="ChEBI" id="CHEBI:58613"/>
        <dbReference type="EC" id="5.3.1.24"/>
    </reaction>
</comment>
<comment type="pathway">
    <text evidence="1">Amino-acid biosynthesis; L-tryptophan biosynthesis; L-tryptophan from chorismate: step 3/5.</text>
</comment>
<comment type="similarity">
    <text evidence="1">Belongs to the TrpF family.</text>
</comment>
<reference key="1">
    <citation type="journal article" date="2004" name="Proc. Natl. Acad. Sci. U.S.A.">
        <title>Complete genomes of two clinical Staphylococcus aureus strains: evidence for the rapid evolution of virulence and drug resistance.</title>
        <authorList>
            <person name="Holden M.T.G."/>
            <person name="Feil E.J."/>
            <person name="Lindsay J.A."/>
            <person name="Peacock S.J."/>
            <person name="Day N.P.J."/>
            <person name="Enright M.C."/>
            <person name="Foster T.J."/>
            <person name="Moore C.E."/>
            <person name="Hurst L."/>
            <person name="Atkin R."/>
            <person name="Barron A."/>
            <person name="Bason N."/>
            <person name="Bentley S.D."/>
            <person name="Chillingworth C."/>
            <person name="Chillingworth T."/>
            <person name="Churcher C."/>
            <person name="Clark L."/>
            <person name="Corton C."/>
            <person name="Cronin A."/>
            <person name="Doggett J."/>
            <person name="Dowd L."/>
            <person name="Feltwell T."/>
            <person name="Hance Z."/>
            <person name="Harris B."/>
            <person name="Hauser H."/>
            <person name="Holroyd S."/>
            <person name="Jagels K."/>
            <person name="James K.D."/>
            <person name="Lennard N."/>
            <person name="Line A."/>
            <person name="Mayes R."/>
            <person name="Moule S."/>
            <person name="Mungall K."/>
            <person name="Ormond D."/>
            <person name="Quail M.A."/>
            <person name="Rabbinowitsch E."/>
            <person name="Rutherford K.M."/>
            <person name="Sanders M."/>
            <person name="Sharp S."/>
            <person name="Simmonds M."/>
            <person name="Stevens K."/>
            <person name="Whitehead S."/>
            <person name="Barrell B.G."/>
            <person name="Spratt B.G."/>
            <person name="Parkhill J."/>
        </authorList>
    </citation>
    <scope>NUCLEOTIDE SEQUENCE [LARGE SCALE GENOMIC DNA]</scope>
    <source>
        <strain>MSSA476</strain>
    </source>
</reference>
<protein>
    <recommendedName>
        <fullName evidence="1">N-(5'-phosphoribosyl)anthranilate isomerase</fullName>
        <shortName evidence="1">PRAI</shortName>
        <ecNumber evidence="1">5.3.1.24</ecNumber>
    </recommendedName>
</protein>
<sequence length="210" mass="23389">MKLKFCGFTSIKDVTAASQLPIDAIGFIHYEKSKRHQTITQIKKLASAVPNHIDKVCVMVNPDLTTIEHVLSNTSINTIQLHGTESIDFIQEIKKKYSSIKITKALAADENIIQNINKYKGFVDLFIIDTPSVSYGGTGQTYDWTILKHIKDIPYLIAGGINSENIQTVNQLKLSHQGYDLASGIEVNGRKDIEKMTAIVNIVKGDRDNE</sequence>
<organism>
    <name type="scientific">Staphylococcus aureus (strain MSSA476)</name>
    <dbReference type="NCBI Taxonomy" id="282459"/>
    <lineage>
        <taxon>Bacteria</taxon>
        <taxon>Bacillati</taxon>
        <taxon>Bacillota</taxon>
        <taxon>Bacilli</taxon>
        <taxon>Bacillales</taxon>
        <taxon>Staphylococcaceae</taxon>
        <taxon>Staphylococcus</taxon>
    </lineage>
</organism>
<gene>
    <name evidence="1" type="primary">trpF</name>
    <name type="ordered locus">SAS1311</name>
</gene>
<accession>Q6G9I8</accession>
<evidence type="ECO:0000255" key="1">
    <source>
        <dbReference type="HAMAP-Rule" id="MF_00135"/>
    </source>
</evidence>